<protein>
    <recommendedName>
        <fullName>Osteoclast-associated immunoglobulin-like receptor</fullName>
        <shortName>Osteoclast-associated receptor</shortName>
        <shortName>hOSCAR</shortName>
    </recommendedName>
    <alternativeName>
        <fullName>Polymeric immunoglobulin receptor 3</fullName>
        <shortName>PIgR-3</shortName>
        <shortName>PIgR3</shortName>
        <shortName>Poly-Ig receptor 3</shortName>
    </alternativeName>
</protein>
<name>OSCAR_HUMAN</name>
<evidence type="ECO:0000250" key="1"/>
<evidence type="ECO:0000255" key="2"/>
<evidence type="ECO:0000256" key="3">
    <source>
        <dbReference type="SAM" id="MobiDB-lite"/>
    </source>
</evidence>
<evidence type="ECO:0000269" key="4">
    <source>
    </source>
</evidence>
<evidence type="ECO:0000269" key="5">
    <source>
    </source>
</evidence>
<evidence type="ECO:0000269" key="6">
    <source ref="1"/>
</evidence>
<evidence type="ECO:0000269" key="7">
    <source ref="3"/>
</evidence>
<evidence type="ECO:0000303" key="8">
    <source>
    </source>
</evidence>
<evidence type="ECO:0000303" key="9">
    <source>
    </source>
</evidence>
<evidence type="ECO:0000303" key="10">
    <source ref="1"/>
</evidence>
<evidence type="ECO:0000305" key="11"/>
<evidence type="ECO:0007829" key="12">
    <source>
        <dbReference type="PDB" id="5EIQ"/>
    </source>
</evidence>
<sequence>MALVLILQLLTLWPLCHTDITPSVPPASYHPKPWLGAQPATVVTPGVNVTLRCRAPQPAWRFGLFKPGEIAPLLFRDVSSELAEFFLEEVTPAQGGIYRCCYRRPDWGPGVWSQPSDVLELLVTEELPRPSLVALPGPVVGPGANVSLRCAGRLRNMSFVLYREGVAAPLQYRHSAQPWADFTLLGARAPGTYSCYYHTPSAPYVLSQRSEVLVISWEGEGPEARPASSAPGMQAPGPPPSDPGAQAPSLSSFRPRGLVLQPLLPQTQDSWDPAPPPSDPGV</sequence>
<organism>
    <name type="scientific">Homo sapiens</name>
    <name type="common">Human</name>
    <dbReference type="NCBI Taxonomy" id="9606"/>
    <lineage>
        <taxon>Eukaryota</taxon>
        <taxon>Metazoa</taxon>
        <taxon>Chordata</taxon>
        <taxon>Craniata</taxon>
        <taxon>Vertebrata</taxon>
        <taxon>Euteleostomi</taxon>
        <taxon>Mammalia</taxon>
        <taxon>Eutheria</taxon>
        <taxon>Euarchontoglires</taxon>
        <taxon>Primates</taxon>
        <taxon>Haplorrhini</taxon>
        <taxon>Catarrhini</taxon>
        <taxon>Hominidae</taxon>
        <taxon>Homo</taxon>
    </lineage>
</organism>
<feature type="signal peptide" evidence="2">
    <location>
        <begin position="1"/>
        <end position="18"/>
    </location>
</feature>
<feature type="chain" id="PRO_0000310951" description="Osteoclast-associated immunoglobulin-like receptor">
    <location>
        <begin position="19"/>
        <end position="282"/>
    </location>
</feature>
<feature type="domain" description="Ig-like 1">
    <location>
        <begin position="22"/>
        <end position="116"/>
    </location>
</feature>
<feature type="domain" description="Ig-like 2">
    <location>
        <begin position="126"/>
        <end position="219"/>
    </location>
</feature>
<feature type="region of interest" description="Disordered" evidence="3">
    <location>
        <begin position="221"/>
        <end position="282"/>
    </location>
</feature>
<feature type="compositionally biased region" description="Pro residues" evidence="3">
    <location>
        <begin position="273"/>
        <end position="282"/>
    </location>
</feature>
<feature type="glycosylation site" description="N-linked (GlcNAc...) asparagine" evidence="2">
    <location>
        <position position="48"/>
    </location>
</feature>
<feature type="glycosylation site" description="N-linked (GlcNAc...) asparagine" evidence="2">
    <location>
        <position position="145"/>
    </location>
</feature>
<feature type="disulfide bond" evidence="1">
    <location>
        <begin position="53"/>
        <end position="100"/>
    </location>
</feature>
<feature type="splice variant" id="VSP_029352" description="In isoform 4 and isoform 6." evidence="8">
    <original>WPLCHTDITPSVP</original>
    <variation>FP</variation>
    <location>
        <begin position="13"/>
        <end position="25"/>
    </location>
</feature>
<feature type="splice variant" id="VSP_029353" description="In isoform 3 and isoform 7." evidence="8 9">
    <original>V</original>
    <variation>VAIIV</variation>
    <location>
        <position position="24"/>
    </location>
</feature>
<feature type="splice variant" id="VSP_029354" description="In isoform 5." evidence="9">
    <location>
        <begin position="129"/>
        <end position="134"/>
    </location>
</feature>
<feature type="splice variant" id="VSP_029355" description="In isoform 2, isoform 3 and isoform 6." evidence="8 10">
    <original>GEGPEARPASSAPGMQAPGPPPSDPGAQAPSLSSFRPRGLVLQPLLPQTQDSWDPAPPPSDPGV</original>
    <variation>DSGSSDYTRGNLVRLGLAGLVLISLGALVTFDWRSQNRAPAGIRP</variation>
    <location>
        <begin position="219"/>
        <end position="282"/>
    </location>
</feature>
<feature type="sequence variant" id="VAR_037108" description="In dbSNP:rs1657535." evidence="4 5 6 7">
    <original>I</original>
    <variation>S</variation>
    <location>
        <position position="97"/>
    </location>
</feature>
<feature type="sequence variant" id="VAR_047393" description="In dbSNP:rs8106130.">
    <original>S</original>
    <variation>Y</variation>
    <location>
        <position position="229"/>
    </location>
</feature>
<feature type="sequence conflict" description="In Ref. 1; AAM19095." evidence="11" ref="1">
    <original>S</original>
    <variation>N</variation>
    <location>
        <position position="158"/>
    </location>
</feature>
<feature type="sequence conflict" description="In Ref. 4; BAC03586 and 5; AX746784." evidence="11" ref="4 5">
    <original>S</original>
    <variation>G</variation>
    <location>
        <position position="194"/>
    </location>
</feature>
<feature type="strand" evidence="12">
    <location>
        <begin position="34"/>
        <end position="39"/>
    </location>
</feature>
<feature type="strand" evidence="12">
    <location>
        <begin position="41"/>
        <end position="43"/>
    </location>
</feature>
<feature type="strand" evidence="12">
    <location>
        <begin position="49"/>
        <end position="65"/>
    </location>
</feature>
<feature type="strand" evidence="12">
    <location>
        <begin position="73"/>
        <end position="87"/>
    </location>
</feature>
<feature type="helix" evidence="12">
    <location>
        <begin position="92"/>
        <end position="94"/>
    </location>
</feature>
<feature type="strand" evidence="12">
    <location>
        <begin position="96"/>
        <end position="103"/>
    </location>
</feature>
<feature type="strand" evidence="12">
    <location>
        <begin position="119"/>
        <end position="123"/>
    </location>
</feature>
<feature type="strand" evidence="12">
    <location>
        <begin position="125"/>
        <end position="127"/>
    </location>
</feature>
<feature type="strand" evidence="12">
    <location>
        <begin position="131"/>
        <end position="134"/>
    </location>
</feature>
<feature type="strand" evidence="12">
    <location>
        <begin position="146"/>
        <end position="151"/>
    </location>
</feature>
<feature type="strand" evidence="12">
    <location>
        <begin position="158"/>
        <end position="163"/>
    </location>
</feature>
<feature type="strand" evidence="12">
    <location>
        <begin position="166"/>
        <end position="174"/>
    </location>
</feature>
<feature type="strand" evidence="12">
    <location>
        <begin position="176"/>
        <end position="184"/>
    </location>
</feature>
<feature type="turn" evidence="12">
    <location>
        <begin position="186"/>
        <end position="188"/>
    </location>
</feature>
<feature type="strand" evidence="12">
    <location>
        <begin position="191"/>
        <end position="198"/>
    </location>
</feature>
<feature type="strand" evidence="12">
    <location>
        <begin position="200"/>
        <end position="203"/>
    </location>
</feature>
<feature type="strand" evidence="12">
    <location>
        <begin position="213"/>
        <end position="215"/>
    </location>
</feature>
<keyword id="KW-0002">3D-structure</keyword>
<keyword id="KW-0025">Alternative splicing</keyword>
<keyword id="KW-1003">Cell membrane</keyword>
<keyword id="KW-1015">Disulfide bond</keyword>
<keyword id="KW-0325">Glycoprotein</keyword>
<keyword id="KW-0393">Immunoglobulin domain</keyword>
<keyword id="KW-0472">Membrane</keyword>
<keyword id="KW-1267">Proteomics identification</keyword>
<keyword id="KW-0675">Receptor</keyword>
<keyword id="KW-1185">Reference proteome</keyword>
<keyword id="KW-0677">Repeat</keyword>
<keyword id="KW-0964">Secreted</keyword>
<keyword id="KW-0732">Signal</keyword>
<keyword id="KW-0812">Transmembrane</keyword>
<keyword id="KW-1133">Transmembrane helix</keyword>
<accession>Q8IYS5</accession>
<accession>B7WNS2</accession>
<accession>Q5GRG5</accession>
<accession>Q8N763</accession>
<accession>Q8NHL4</accession>
<accession>Q8WXQ0</accession>
<accession>Q8WXQ1</accession>
<accession>Q8WXQ2</accession>
<gene>
    <name type="primary">OSCAR</name>
</gene>
<reference key="1">
    <citation type="submission" date="2000-04" db="EMBL/GenBank/DDBJ databases">
        <title>Novel PIGR2.</title>
        <authorList>
            <person name="Zhang W."/>
            <person name="Li N."/>
            <person name="Wan T."/>
            <person name="Cao X."/>
        </authorList>
    </citation>
    <scope>NUCLEOTIDE SEQUENCE [MRNA] (ISOFORM 2)</scope>
    <scope>VARIANT SER-97</scope>
</reference>
<reference key="2">
    <citation type="journal article" date="2002" name="J. Exp. Med.">
        <title>A novel member of the leukocyte receptor complex regulates osteoclast differentiation.</title>
        <authorList>
            <person name="Kim N."/>
            <person name="Takami M."/>
            <person name="Rho J."/>
            <person name="Josien R."/>
            <person name="Choi Y."/>
        </authorList>
    </citation>
    <scope>NUCLEOTIDE SEQUENCE [MRNA] (ISOFORMS 1; 2; 3; 4 AND 6)</scope>
</reference>
<reference key="3">
    <citation type="patent" date="2003-06-20" number="EP1308459">
        <title>Full-length cDNA sequences.</title>
        <authorList>
            <person name="Isogai T."/>
            <person name="Sugiyama T."/>
            <person name="Otsuki T."/>
            <person name="Wakamatsu A."/>
            <person name="Sato H."/>
            <person name="Ishii S."/>
            <person name="Yamamoto J."/>
            <person name="Isono Y."/>
            <person name="Hio Y."/>
            <person name="Otsuka K."/>
            <person name="Nagai K."/>
            <person name="Irie R."/>
            <person name="Tamechika I."/>
            <person name="Seki N."/>
            <person name="Yoshikawa T."/>
            <person name="Otsuka M."/>
            <person name="Nagahari K."/>
            <person name="Masuho Y."/>
        </authorList>
    </citation>
    <scope>NUCLEOTIDE SEQUENCE [GENOMIC DNA] (ISOFORM 5)</scope>
    <scope>VARIANT SER-97</scope>
</reference>
<reference key="4">
    <citation type="journal article" date="2004" name="Nat. Genet.">
        <title>Complete sequencing and characterization of 21,243 full-length human cDNAs.</title>
        <authorList>
            <person name="Ota T."/>
            <person name="Suzuki Y."/>
            <person name="Nishikawa T."/>
            <person name="Otsuki T."/>
            <person name="Sugiyama T."/>
            <person name="Irie R."/>
            <person name="Wakamatsu A."/>
            <person name="Hayashi K."/>
            <person name="Sato H."/>
            <person name="Nagai K."/>
            <person name="Kimura K."/>
            <person name="Makita H."/>
            <person name="Sekine M."/>
            <person name="Obayashi M."/>
            <person name="Nishi T."/>
            <person name="Shibahara T."/>
            <person name="Tanaka T."/>
            <person name="Ishii S."/>
            <person name="Yamamoto J."/>
            <person name="Saito K."/>
            <person name="Kawai Y."/>
            <person name="Isono Y."/>
            <person name="Nakamura Y."/>
            <person name="Nagahari K."/>
            <person name="Murakami K."/>
            <person name="Yasuda T."/>
            <person name="Iwayanagi T."/>
            <person name="Wagatsuma M."/>
            <person name="Shiratori A."/>
            <person name="Sudo H."/>
            <person name="Hosoiri T."/>
            <person name="Kaku Y."/>
            <person name="Kodaira H."/>
            <person name="Kondo H."/>
            <person name="Sugawara M."/>
            <person name="Takahashi M."/>
            <person name="Kanda K."/>
            <person name="Yokoi T."/>
            <person name="Furuya T."/>
            <person name="Kikkawa E."/>
            <person name="Omura Y."/>
            <person name="Abe K."/>
            <person name="Kamihara K."/>
            <person name="Katsuta N."/>
            <person name="Sato K."/>
            <person name="Tanikawa M."/>
            <person name="Yamazaki M."/>
            <person name="Ninomiya K."/>
            <person name="Ishibashi T."/>
            <person name="Yamashita H."/>
            <person name="Murakawa K."/>
            <person name="Fujimori K."/>
            <person name="Tanai H."/>
            <person name="Kimata M."/>
            <person name="Watanabe M."/>
            <person name="Hiraoka S."/>
            <person name="Chiba Y."/>
            <person name="Ishida S."/>
            <person name="Ono Y."/>
            <person name="Takiguchi S."/>
            <person name="Watanabe S."/>
            <person name="Yosida M."/>
            <person name="Hotuta T."/>
            <person name="Kusano J."/>
            <person name="Kanehori K."/>
            <person name="Takahashi-Fujii A."/>
            <person name="Hara H."/>
            <person name="Tanase T.-O."/>
            <person name="Nomura Y."/>
            <person name="Togiya S."/>
            <person name="Komai F."/>
            <person name="Hara R."/>
            <person name="Takeuchi K."/>
            <person name="Arita M."/>
            <person name="Imose N."/>
            <person name="Musashino K."/>
            <person name="Yuuki H."/>
            <person name="Oshima A."/>
            <person name="Sasaki N."/>
            <person name="Aotsuka S."/>
            <person name="Yoshikawa Y."/>
            <person name="Matsunawa H."/>
            <person name="Ichihara T."/>
            <person name="Shiohata N."/>
            <person name="Sano S."/>
            <person name="Moriya S."/>
            <person name="Momiyama H."/>
            <person name="Satoh N."/>
            <person name="Takami S."/>
            <person name="Terashima Y."/>
            <person name="Suzuki O."/>
            <person name="Nakagawa S."/>
            <person name="Senoh A."/>
            <person name="Mizoguchi H."/>
            <person name="Goto Y."/>
            <person name="Shimizu F."/>
            <person name="Wakebe H."/>
            <person name="Hishigaki H."/>
            <person name="Watanabe T."/>
            <person name="Sugiyama A."/>
            <person name="Takemoto M."/>
            <person name="Kawakami B."/>
            <person name="Yamazaki M."/>
            <person name="Watanabe K."/>
            <person name="Kumagai A."/>
            <person name="Itakura S."/>
            <person name="Fukuzumi Y."/>
            <person name="Fujimori Y."/>
            <person name="Komiyama M."/>
            <person name="Tashiro H."/>
            <person name="Tanigami A."/>
            <person name="Fujiwara T."/>
            <person name="Ono T."/>
            <person name="Yamada K."/>
            <person name="Fujii Y."/>
            <person name="Ozaki K."/>
            <person name="Hirao M."/>
            <person name="Ohmori Y."/>
            <person name="Kawabata A."/>
            <person name="Hikiji T."/>
            <person name="Kobatake N."/>
            <person name="Inagaki H."/>
            <person name="Ikema Y."/>
            <person name="Okamoto S."/>
            <person name="Okitani R."/>
            <person name="Kawakami T."/>
            <person name="Noguchi S."/>
            <person name="Itoh T."/>
            <person name="Shigeta K."/>
            <person name="Senba T."/>
            <person name="Matsumura K."/>
            <person name="Nakajima Y."/>
            <person name="Mizuno T."/>
            <person name="Morinaga M."/>
            <person name="Sasaki M."/>
            <person name="Togashi T."/>
            <person name="Oyama M."/>
            <person name="Hata H."/>
            <person name="Watanabe M."/>
            <person name="Komatsu T."/>
            <person name="Mizushima-Sugano J."/>
            <person name="Satoh T."/>
            <person name="Shirai Y."/>
            <person name="Takahashi Y."/>
            <person name="Nakagawa K."/>
            <person name="Okumura K."/>
            <person name="Nagase T."/>
            <person name="Nomura N."/>
            <person name="Kikuchi H."/>
            <person name="Masuho Y."/>
            <person name="Yamashita R."/>
            <person name="Nakai K."/>
            <person name="Yada T."/>
            <person name="Nakamura Y."/>
            <person name="Ohara O."/>
            <person name="Isogai T."/>
            <person name="Sugano S."/>
        </authorList>
    </citation>
    <scope>NUCLEOTIDE SEQUENCE [LARGE SCALE MRNA] (ISOFORMS 5 AND 7)</scope>
    <scope>VARIANT SER-97</scope>
    <source>
        <tissue>Macrophage</tissue>
    </source>
</reference>
<reference key="5">
    <citation type="journal article" date="2004" name="Nature">
        <title>The DNA sequence and biology of human chromosome 19.</title>
        <authorList>
            <person name="Grimwood J."/>
            <person name="Gordon L.A."/>
            <person name="Olsen A.S."/>
            <person name="Terry A."/>
            <person name="Schmutz J."/>
            <person name="Lamerdin J.E."/>
            <person name="Hellsten U."/>
            <person name="Goodstein D."/>
            <person name="Couronne O."/>
            <person name="Tran-Gyamfi M."/>
            <person name="Aerts A."/>
            <person name="Altherr M."/>
            <person name="Ashworth L."/>
            <person name="Bajorek E."/>
            <person name="Black S."/>
            <person name="Branscomb E."/>
            <person name="Caenepeel S."/>
            <person name="Carrano A.V."/>
            <person name="Caoile C."/>
            <person name="Chan Y.M."/>
            <person name="Christensen M."/>
            <person name="Cleland C.A."/>
            <person name="Copeland A."/>
            <person name="Dalin E."/>
            <person name="Dehal P."/>
            <person name="Denys M."/>
            <person name="Detter J.C."/>
            <person name="Escobar J."/>
            <person name="Flowers D."/>
            <person name="Fotopulos D."/>
            <person name="Garcia C."/>
            <person name="Georgescu A.M."/>
            <person name="Glavina T."/>
            <person name="Gomez M."/>
            <person name="Gonzales E."/>
            <person name="Groza M."/>
            <person name="Hammon N."/>
            <person name="Hawkins T."/>
            <person name="Haydu L."/>
            <person name="Ho I."/>
            <person name="Huang W."/>
            <person name="Israni S."/>
            <person name="Jett J."/>
            <person name="Kadner K."/>
            <person name="Kimball H."/>
            <person name="Kobayashi A."/>
            <person name="Larionov V."/>
            <person name="Leem S.-H."/>
            <person name="Lopez F."/>
            <person name="Lou Y."/>
            <person name="Lowry S."/>
            <person name="Malfatti S."/>
            <person name="Martinez D."/>
            <person name="McCready P.M."/>
            <person name="Medina C."/>
            <person name="Morgan J."/>
            <person name="Nelson K."/>
            <person name="Nolan M."/>
            <person name="Ovcharenko I."/>
            <person name="Pitluck S."/>
            <person name="Pollard M."/>
            <person name="Popkie A.P."/>
            <person name="Predki P."/>
            <person name="Quan G."/>
            <person name="Ramirez L."/>
            <person name="Rash S."/>
            <person name="Retterer J."/>
            <person name="Rodriguez A."/>
            <person name="Rogers S."/>
            <person name="Salamov A."/>
            <person name="Salazar A."/>
            <person name="She X."/>
            <person name="Smith D."/>
            <person name="Slezak T."/>
            <person name="Solovyev V."/>
            <person name="Thayer N."/>
            <person name="Tice H."/>
            <person name="Tsai M."/>
            <person name="Ustaszewska A."/>
            <person name="Vo N."/>
            <person name="Wagner M."/>
            <person name="Wheeler J."/>
            <person name="Wu K."/>
            <person name="Xie G."/>
            <person name="Yang J."/>
            <person name="Dubchak I."/>
            <person name="Furey T.S."/>
            <person name="DeJong P."/>
            <person name="Dickson M."/>
            <person name="Gordon D."/>
            <person name="Eichler E.E."/>
            <person name="Pennacchio L.A."/>
            <person name="Richardson P."/>
            <person name="Stubbs L."/>
            <person name="Rokhsar D.S."/>
            <person name="Myers R.M."/>
            <person name="Rubin E.M."/>
            <person name="Lucas S.M."/>
        </authorList>
    </citation>
    <scope>NUCLEOTIDE SEQUENCE [LARGE SCALE GENOMIC DNA]</scope>
</reference>
<reference key="6">
    <citation type="journal article" date="2004" name="Genome Res.">
        <title>The status, quality, and expansion of the NIH full-length cDNA project: the Mammalian Gene Collection (MGC).</title>
        <authorList>
            <consortium name="The MGC Project Team"/>
        </authorList>
    </citation>
    <scope>NUCLEOTIDE SEQUENCE [LARGE SCALE MRNA] (ISOFORM 1)</scope>
    <scope>VARIANT SER-97</scope>
    <source>
        <tissue>Testis</tissue>
    </source>
</reference>
<proteinExistence type="evidence at protein level"/>
<dbReference type="EMBL" id="AF251702">
    <property type="protein sequence ID" value="AAM19095.1"/>
    <property type="molecule type" value="mRNA"/>
</dbReference>
<dbReference type="EMBL" id="AF391162">
    <property type="protein sequence ID" value="AAL68495.1"/>
    <property type="molecule type" value="mRNA"/>
</dbReference>
<dbReference type="EMBL" id="AF391163">
    <property type="protein sequence ID" value="AAL68496.1"/>
    <property type="molecule type" value="mRNA"/>
</dbReference>
<dbReference type="EMBL" id="AF391164">
    <property type="protein sequence ID" value="AAL68497.1"/>
    <property type="molecule type" value="mRNA"/>
</dbReference>
<dbReference type="EMBL" id="AF474152">
    <property type="protein sequence ID" value="AAQ05766.1"/>
    <property type="molecule type" value="mRNA"/>
</dbReference>
<dbReference type="EMBL" id="AF474153">
    <property type="protein sequence ID" value="AAQ05767.1"/>
    <property type="molecule type" value="mRNA"/>
</dbReference>
<dbReference type="EMBL" id="AX746784">
    <property type="status" value="NOT_ANNOTATED_CDS"/>
    <property type="molecule type" value="mRNA"/>
</dbReference>
<dbReference type="EMBL" id="AK091111">
    <property type="protein sequence ID" value="BAC03586.1"/>
    <property type="molecule type" value="mRNA"/>
</dbReference>
<dbReference type="EMBL" id="AK130199">
    <property type="status" value="NOT_ANNOTATED_CDS"/>
    <property type="molecule type" value="mRNA"/>
</dbReference>
<dbReference type="EMBL" id="AC012314">
    <property type="status" value="NOT_ANNOTATED_CDS"/>
    <property type="molecule type" value="Genomic_DNA"/>
</dbReference>
<dbReference type="EMBL" id="BC035023">
    <property type="protein sequence ID" value="AAH35023.1"/>
    <property type="molecule type" value="mRNA"/>
</dbReference>
<dbReference type="CCDS" id="CCDS12873.1">
    <molecule id="Q8IYS5-3"/>
</dbReference>
<dbReference type="CCDS" id="CCDS12874.1">
    <molecule id="Q8IYS5-6"/>
</dbReference>
<dbReference type="CCDS" id="CCDS12875.1">
    <molecule id="Q8IYS5-2"/>
</dbReference>
<dbReference type="CCDS" id="CCDS12876.1">
    <molecule id="Q8IYS5-7"/>
</dbReference>
<dbReference type="CCDS" id="CCDS62789.1">
    <molecule id="Q8IYS5-4"/>
</dbReference>
<dbReference type="CCDS" id="CCDS74444.1">
    <molecule id="Q8IYS5-1"/>
</dbReference>
<dbReference type="RefSeq" id="NP_001269278.1">
    <property type="nucleotide sequence ID" value="NM_001282349.1"/>
</dbReference>
<dbReference type="RefSeq" id="NP_001269279.1">
    <property type="nucleotide sequence ID" value="NM_001282350.1"/>
</dbReference>
<dbReference type="RefSeq" id="NP_570127.3">
    <property type="nucleotide sequence ID" value="NM_130771.4"/>
</dbReference>
<dbReference type="RefSeq" id="NP_573398.2">
    <property type="nucleotide sequence ID" value="NM_133168.4"/>
</dbReference>
<dbReference type="RefSeq" id="NP_573399.2">
    <property type="nucleotide sequence ID" value="NM_133169.4"/>
</dbReference>
<dbReference type="RefSeq" id="NP_996554.2">
    <property type="nucleotide sequence ID" value="NM_206818.2"/>
</dbReference>
<dbReference type="PDB" id="5CJ8">
    <property type="method" value="X-ray"/>
    <property type="resolution" value="2.02 A"/>
    <property type="chains" value="A=31-215"/>
</dbReference>
<dbReference type="PDB" id="5CJB">
    <property type="method" value="X-ray"/>
    <property type="resolution" value="2.40 A"/>
    <property type="chains" value="A=31-215"/>
</dbReference>
<dbReference type="PDB" id="5EIQ">
    <property type="method" value="X-ray"/>
    <property type="resolution" value="2.01 A"/>
    <property type="chains" value="A=28-215"/>
</dbReference>
<dbReference type="PDB" id="5EIV">
    <property type="method" value="X-ray"/>
    <property type="resolution" value="2.41 A"/>
    <property type="chains" value="A/B=26-215"/>
</dbReference>
<dbReference type="PDBsum" id="5CJ8"/>
<dbReference type="PDBsum" id="5CJB"/>
<dbReference type="PDBsum" id="5EIQ"/>
<dbReference type="PDBsum" id="5EIV"/>
<dbReference type="SMR" id="Q8IYS5"/>
<dbReference type="BioGRID" id="125947">
    <property type="interactions" value="8"/>
</dbReference>
<dbReference type="FunCoup" id="Q8IYS5">
    <property type="interactions" value="36"/>
</dbReference>
<dbReference type="IntAct" id="Q8IYS5">
    <property type="interactions" value="4"/>
</dbReference>
<dbReference type="STRING" id="9606.ENSP00000479089"/>
<dbReference type="GlyCosmos" id="Q8IYS5">
    <property type="glycosylation" value="3 sites, 1 glycan"/>
</dbReference>
<dbReference type="GlyGen" id="Q8IYS5">
    <property type="glycosylation" value="4 sites, 1 O-linked glycan (1 site)"/>
</dbReference>
<dbReference type="iPTMnet" id="Q8IYS5"/>
<dbReference type="BioMuta" id="OSCAR"/>
<dbReference type="DMDM" id="311033418"/>
<dbReference type="MassIVE" id="Q8IYS5"/>
<dbReference type="PaxDb" id="9606-ENSP00000479089"/>
<dbReference type="PeptideAtlas" id="Q8IYS5"/>
<dbReference type="ProteomicsDB" id="71224">
    <molecule id="Q8IYS5-1"/>
</dbReference>
<dbReference type="ProteomicsDB" id="71225">
    <molecule id="Q8IYS5-2"/>
</dbReference>
<dbReference type="ProteomicsDB" id="71226">
    <molecule id="Q8IYS5-3"/>
</dbReference>
<dbReference type="ProteomicsDB" id="71227">
    <molecule id="Q8IYS5-4"/>
</dbReference>
<dbReference type="ProteomicsDB" id="71228">
    <molecule id="Q8IYS5-5"/>
</dbReference>
<dbReference type="ProteomicsDB" id="71229">
    <molecule id="Q8IYS5-6"/>
</dbReference>
<dbReference type="ProteomicsDB" id="71230">
    <molecule id="Q8IYS5-7"/>
</dbReference>
<dbReference type="Antibodypedia" id="32787">
    <property type="antibodies" value="245 antibodies from 26 providers"/>
</dbReference>
<dbReference type="DNASU" id="126014"/>
<dbReference type="Ensembl" id="ENST00000284648.10">
    <property type="protein sequence ID" value="ENSP00000365808.2"/>
    <property type="gene ID" value="ENSG00000170909.14"/>
</dbReference>
<dbReference type="Ensembl" id="ENST00000391761.5">
    <property type="protein sequence ID" value="ENSP00000375641.1"/>
    <property type="gene ID" value="ENSG00000170909.14"/>
</dbReference>
<dbReference type="Ensembl" id="ENST00000610577.4">
    <molecule id="Q8IYS5-7"/>
    <property type="protein sequence ID" value="ENSP00000478594.1"/>
    <property type="gene ID" value="ENSG00000276982.4"/>
</dbReference>
<dbReference type="Ensembl" id="ENST00000610915.4">
    <molecule id="Q8IYS5-4"/>
    <property type="protein sequence ID" value="ENSP00000479317.1"/>
    <property type="gene ID" value="ENSG00000277088.4"/>
</dbReference>
<dbReference type="Ensembl" id="ENST00000610985.4">
    <molecule id="Q8IYS5-7"/>
    <property type="protein sequence ID" value="ENSP00000484755.1"/>
    <property type="gene ID" value="ENSG00000274703.4"/>
</dbReference>
<dbReference type="Ensembl" id="ENST00000611143.4">
    <molecule id="Q8IYS5-3"/>
    <property type="protein sequence ID" value="ENSP00000477994.1"/>
    <property type="gene ID" value="ENSG00000278533.4"/>
</dbReference>
<dbReference type="Ensembl" id="ENST00000611480.4">
    <molecule id="Q8IYS5-1"/>
    <property type="protein sequence ID" value="ENSP00000480193.1"/>
    <property type="gene ID" value="ENSG00000275551.4"/>
</dbReference>
<dbReference type="Ensembl" id="ENST00000611535.4">
    <molecule id="Q8IYS5-2"/>
    <property type="protein sequence ID" value="ENSP00000483744.1"/>
    <property type="gene ID" value="ENSG00000275736.4"/>
</dbReference>
<dbReference type="Ensembl" id="ENST00000611715.4">
    <molecule id="Q8IYS5-4"/>
    <property type="protein sequence ID" value="ENSP00000478382.1"/>
    <property type="gene ID" value="ENSG00000278533.4"/>
</dbReference>
<dbReference type="Ensembl" id="ENST00000611719.4">
    <molecule id="Q8IYS5-4"/>
    <property type="protein sequence ID" value="ENSP00000478099.1"/>
    <property type="gene ID" value="ENSG00000275644.4"/>
</dbReference>
<dbReference type="Ensembl" id="ENST00000611918.4">
    <molecule id="Q8IYS5-4"/>
    <property type="protein sequence ID" value="ENSP00000482460.1"/>
    <property type="gene ID" value="ENSG00000276982.4"/>
</dbReference>
<dbReference type="Ensembl" id="ENST00000611987.4">
    <molecule id="Q8IYS5-3"/>
    <property type="protein sequence ID" value="ENSP00000478027.1"/>
    <property type="gene ID" value="ENSG00000276982.4"/>
</dbReference>
<dbReference type="Ensembl" id="ENST00000612289.4">
    <molecule id="Q8IYS5-1"/>
    <property type="protein sequence ID" value="ENSP00000482414.1"/>
    <property type="gene ID" value="ENSG00000277088.4"/>
</dbReference>
<dbReference type="Ensembl" id="ENST00000612406.4">
    <molecule id="Q8IYS5-7"/>
    <property type="protein sequence ID" value="ENSP00000478224.1"/>
    <property type="gene ID" value="ENSG00000273511.4"/>
</dbReference>
<dbReference type="Ensembl" id="ENST00000612953.4">
    <molecule id="Q8IYS5-7"/>
    <property type="protein sequence ID" value="ENSP00000479954.1"/>
    <property type="gene ID" value="ENSG00000275644.4"/>
</dbReference>
<dbReference type="Ensembl" id="ENST00000613426.4">
    <molecule id="Q8IYS5-1"/>
    <property type="protein sequence ID" value="ENSP00000480900.1"/>
    <property type="gene ID" value="ENSG00000275736.4"/>
</dbReference>
<dbReference type="Ensembl" id="ENST00000613814.1">
    <molecule id="Q8IYS5-4"/>
    <property type="protein sequence ID" value="ENSP00000484125.1"/>
    <property type="gene ID" value="ENSG00000275736.4"/>
</dbReference>
<dbReference type="Ensembl" id="ENST00000614003.4">
    <molecule id="Q8IYS5-1"/>
    <property type="protein sequence ID" value="ENSP00000481647.1"/>
    <property type="gene ID" value="ENSG00000274703.4"/>
</dbReference>
<dbReference type="Ensembl" id="ENST00000614380.4">
    <molecule id="Q8IYS5-7"/>
    <property type="protein sequence ID" value="ENSP00000482734.1"/>
    <property type="gene ID" value="ENSG00000277088.4"/>
</dbReference>
<dbReference type="Ensembl" id="ENST00000615074.4">
    <molecule id="Q8IYS5-7"/>
    <property type="protein sequence ID" value="ENSP00000477845.1"/>
    <property type="gene ID" value="ENSG00000275736.4"/>
</dbReference>
<dbReference type="Ensembl" id="ENST00000615546.4">
    <molecule id="Q8IYS5-4"/>
    <property type="protein sequence ID" value="ENSP00000482402.1"/>
    <property type="gene ID" value="ENSG00000275551.4"/>
</dbReference>
<dbReference type="Ensembl" id="ENST00000616215.4">
    <property type="protein sequence ID" value="ENSP00000479628.1"/>
    <property type="gene ID" value="ENSG00000170909.14"/>
</dbReference>
<dbReference type="Ensembl" id="ENST00000616227.4">
    <molecule id="Q8IYS5-7"/>
    <property type="protein sequence ID" value="ENSP00000479849.1"/>
    <property type="gene ID" value="ENSG00000275736.4"/>
</dbReference>
<dbReference type="Ensembl" id="ENST00000616232.4">
    <molecule id="Q8IYS5-4"/>
    <property type="protein sequence ID" value="ENSP00000484567.1"/>
    <property type="gene ID" value="ENSG00000274703.4"/>
</dbReference>
<dbReference type="Ensembl" id="ENST00000616461.4">
    <molecule id="Q8IYS5-7"/>
    <property type="protein sequence ID" value="ENSP00000482610.1"/>
    <property type="gene ID" value="ENSG00000278533.4"/>
</dbReference>
<dbReference type="Ensembl" id="ENST00000616758.4">
    <molecule id="Q8IYS5-1"/>
    <property type="protein sequence ID" value="ENSP00000481785.1"/>
    <property type="gene ID" value="ENSG00000278533.4"/>
</dbReference>
<dbReference type="Ensembl" id="ENST00000617187.4">
    <molecule id="Q8IYS5-7"/>
    <property type="protein sequence ID" value="ENSP00000481805.1"/>
    <property type="gene ID" value="ENSG00000275551.4"/>
</dbReference>
<dbReference type="Ensembl" id="ENST00000617210.4">
    <molecule id="Q8IYS5-3"/>
    <property type="protein sequence ID" value="ENSP00000482359.1"/>
    <property type="gene ID" value="ENSG00000278378.4"/>
</dbReference>
<dbReference type="Ensembl" id="ENST00000617622.4">
    <molecule id="Q8IYS5-1"/>
    <property type="protein sequence ID" value="ENSP00000480863.1"/>
    <property type="gene ID" value="ENSG00000273511.4"/>
</dbReference>
<dbReference type="Ensembl" id="ENST00000617834.4">
    <molecule id="Q8IYS5-3"/>
    <property type="protein sequence ID" value="ENSP00000481147.1"/>
    <property type="gene ID" value="ENSG00000275551.4"/>
</dbReference>
<dbReference type="Ensembl" id="ENST00000617993.4">
    <molecule id="Q8IYS5-7"/>
    <property type="protein sequence ID" value="ENSP00000481261.1"/>
    <property type="gene ID" value="ENSG00000278378.4"/>
</dbReference>
<dbReference type="Ensembl" id="ENST00000618710.4">
    <molecule id="Q8IYS5-1"/>
    <property type="protein sequence ID" value="ENSP00000484323.1"/>
    <property type="gene ID" value="ENSG00000278378.4"/>
</dbReference>
<dbReference type="Ensembl" id="ENST00000619170.4">
    <molecule id="Q8IYS5-3"/>
    <property type="protein sequence ID" value="ENSP00000482545.1"/>
    <property type="gene ID" value="ENSG00000273511.4"/>
</dbReference>
<dbReference type="Ensembl" id="ENST00000619287.4">
    <molecule id="Q8IYS5-6"/>
    <property type="protein sequence ID" value="ENSP00000484977.1"/>
    <property type="gene ID" value="ENSG00000275736.4"/>
</dbReference>
<dbReference type="Ensembl" id="ENST00000619631.4">
    <molecule id="Q8IYS5-4"/>
    <property type="protein sequence ID" value="ENSP00000484878.1"/>
    <property type="gene ID" value="ENSG00000273511.4"/>
</dbReference>
<dbReference type="Ensembl" id="ENST00000620283.4">
    <molecule id="Q8IYS5-3"/>
    <property type="protein sequence ID" value="ENSP00000483090.1"/>
    <property type="gene ID" value="ENSG00000274703.4"/>
</dbReference>
<dbReference type="Ensembl" id="ENST00000620647.4">
    <molecule id="Q8IYS5-1"/>
    <property type="protein sequence ID" value="ENSP00000478216.1"/>
    <property type="gene ID" value="ENSG00000275644.4"/>
</dbReference>
<dbReference type="Ensembl" id="ENST00000621284.4">
    <molecule id="Q8IYS5-4"/>
    <property type="protein sequence ID" value="ENSP00000477825.1"/>
    <property type="gene ID" value="ENSG00000275736.4"/>
</dbReference>
<dbReference type="Ensembl" id="ENST00000621290.4">
    <molecule id="Q8IYS5-3"/>
    <property type="protein sequence ID" value="ENSP00000482791.1"/>
    <property type="gene ID" value="ENSG00000275736.4"/>
</dbReference>
<dbReference type="Ensembl" id="ENST00000621328.4">
    <molecule id="Q8IYS5-3"/>
    <property type="protein sequence ID" value="ENSP00000482997.1"/>
    <property type="gene ID" value="ENSG00000275644.4"/>
</dbReference>
<dbReference type="Ensembl" id="ENST00000621506.4">
    <molecule id="Q8IYS5-4"/>
    <property type="protein sequence ID" value="ENSP00000480424.1"/>
    <property type="gene ID" value="ENSG00000278378.4"/>
</dbReference>
<dbReference type="Ensembl" id="ENST00000621788.4">
    <molecule id="Q8IYS5-3"/>
    <property type="protein sequence ID" value="ENSP00000481926.1"/>
    <property type="gene ID" value="ENSG00000275736.4"/>
</dbReference>
<dbReference type="Ensembl" id="ENST00000622288.4">
    <molecule id="Q8IYS5-3"/>
    <property type="protein sequence ID" value="ENSP00000484602.1"/>
    <property type="gene ID" value="ENSG00000277088.4"/>
</dbReference>
<dbReference type="Ensembl" id="ENST00000622326.4">
    <molecule id="Q8IYS5-1"/>
    <property type="protein sequence ID" value="ENSP00000481257.1"/>
    <property type="gene ID" value="ENSG00000276982.4"/>
</dbReference>
<dbReference type="GeneID" id="126014"/>
<dbReference type="KEGG" id="hsa:126014"/>
<dbReference type="UCSC" id="uc002qdc.5">
    <molecule id="Q8IYS5-1"/>
    <property type="organism name" value="human"/>
</dbReference>
<dbReference type="AGR" id="HGNC:29960"/>
<dbReference type="CTD" id="126014"/>
<dbReference type="DisGeNET" id="126014"/>
<dbReference type="GeneCards" id="OSCAR"/>
<dbReference type="HGNC" id="HGNC:29960">
    <property type="gene designation" value="OSCAR"/>
</dbReference>
<dbReference type="HPA" id="ENSG00000170909">
    <property type="expression patterns" value="Group enriched (bone marrow, lung, lymphoid tissue)"/>
</dbReference>
<dbReference type="MIM" id="606862">
    <property type="type" value="gene"/>
</dbReference>
<dbReference type="neXtProt" id="NX_Q8IYS5"/>
<dbReference type="PharmGKB" id="PA162398474"/>
<dbReference type="VEuPathDB" id="HostDB:ENSG00000170909"/>
<dbReference type="eggNOG" id="ENOG502T2B6">
    <property type="taxonomic scope" value="Eukaryota"/>
</dbReference>
<dbReference type="InParanoid" id="Q8IYS5"/>
<dbReference type="OrthoDB" id="9832073at2759"/>
<dbReference type="PAN-GO" id="Q8IYS5">
    <property type="GO annotations" value="2 GO annotations based on evolutionary models"/>
</dbReference>
<dbReference type="PhylomeDB" id="Q8IYS5"/>
<dbReference type="TreeFam" id="TF336644"/>
<dbReference type="PathwayCommons" id="Q8IYS5"/>
<dbReference type="Reactome" id="R-HSA-198933">
    <property type="pathway name" value="Immunoregulatory interactions between a Lymphoid and a non-Lymphoid cell"/>
</dbReference>
<dbReference type="Reactome" id="R-HSA-6798695">
    <property type="pathway name" value="Neutrophil degranulation"/>
</dbReference>
<dbReference type="SignaLink" id="Q8IYS5"/>
<dbReference type="SIGNOR" id="Q8IYS5"/>
<dbReference type="BioGRID-ORCS" id="126014">
    <property type="hits" value="19 hits in 1147 CRISPR screens"/>
</dbReference>
<dbReference type="EvolutionaryTrace" id="Q8IYS5"/>
<dbReference type="GeneWiki" id="OSCAR_(gene)"/>
<dbReference type="GenomeRNAi" id="126014"/>
<dbReference type="Pharos" id="Q8IYS5">
    <property type="development level" value="Tbio"/>
</dbReference>
<dbReference type="PRO" id="PR:Q8IYS5"/>
<dbReference type="Proteomes" id="UP000005640">
    <property type="component" value="Chromosome 19"/>
</dbReference>
<dbReference type="RNAct" id="Q8IYS5">
    <property type="molecule type" value="protein"/>
</dbReference>
<dbReference type="Bgee" id="ENSG00000170909">
    <property type="expression patterns" value="Expressed in monocyte and 94 other cell types or tissues"/>
</dbReference>
<dbReference type="ExpressionAtlas" id="Q8IYS5">
    <property type="expression patterns" value="baseline and differential"/>
</dbReference>
<dbReference type="GO" id="GO:0070062">
    <property type="term" value="C:extracellular exosome"/>
    <property type="evidence" value="ECO:0007005"/>
    <property type="project" value="UniProtKB"/>
</dbReference>
<dbReference type="GO" id="GO:0005576">
    <property type="term" value="C:extracellular region"/>
    <property type="evidence" value="ECO:0000304"/>
    <property type="project" value="Reactome"/>
</dbReference>
<dbReference type="GO" id="GO:0005886">
    <property type="term" value="C:plasma membrane"/>
    <property type="evidence" value="ECO:0000318"/>
    <property type="project" value="GO_Central"/>
</dbReference>
<dbReference type="GO" id="GO:0035580">
    <property type="term" value="C:specific granule lumen"/>
    <property type="evidence" value="ECO:0000304"/>
    <property type="project" value="Reactome"/>
</dbReference>
<dbReference type="GO" id="GO:1904724">
    <property type="term" value="C:tertiary granule lumen"/>
    <property type="evidence" value="ECO:0000304"/>
    <property type="project" value="Reactome"/>
</dbReference>
<dbReference type="GO" id="GO:0038064">
    <property type="term" value="F:collagen receptor activity"/>
    <property type="evidence" value="ECO:0000314"/>
    <property type="project" value="MGI"/>
</dbReference>
<dbReference type="GO" id="GO:0002764">
    <property type="term" value="P:immune response-regulating signaling pathway"/>
    <property type="evidence" value="ECO:0000318"/>
    <property type="project" value="GO_Central"/>
</dbReference>
<dbReference type="GO" id="GO:0030316">
    <property type="term" value="P:osteoclast differentiation"/>
    <property type="evidence" value="ECO:0000315"/>
    <property type="project" value="MGI"/>
</dbReference>
<dbReference type="FunFam" id="2.60.40.10:FF:000049">
    <property type="entry name" value="Leukocyte immunoglobulin-like receptor subfamily B member 1"/>
    <property type="match status" value="1"/>
</dbReference>
<dbReference type="FunFam" id="2.60.40.10:FF:001467">
    <property type="entry name" value="Osteoclast-associated immunoglobulin-like receptor"/>
    <property type="match status" value="1"/>
</dbReference>
<dbReference type="Gene3D" id="2.60.40.10">
    <property type="entry name" value="Immunoglobulins"/>
    <property type="match status" value="2"/>
</dbReference>
<dbReference type="InterPro" id="IPR036179">
    <property type="entry name" value="Ig-like_dom_sf"/>
</dbReference>
<dbReference type="InterPro" id="IPR013783">
    <property type="entry name" value="Ig-like_fold"/>
</dbReference>
<dbReference type="InterPro" id="IPR050412">
    <property type="entry name" value="Ig-like_Receptors_ImmuneReg"/>
</dbReference>
<dbReference type="InterPro" id="IPR003599">
    <property type="entry name" value="Ig_sub"/>
</dbReference>
<dbReference type="PANTHER" id="PTHR11738">
    <property type="entry name" value="MHC CLASS I NK CELL RECEPTOR"/>
    <property type="match status" value="1"/>
</dbReference>
<dbReference type="PANTHER" id="PTHR11738:SF186">
    <property type="entry name" value="OSTEOCLAST-ASSOCIATED IMMUNOGLOBULIN-LIKE RECEPTOR"/>
    <property type="match status" value="1"/>
</dbReference>
<dbReference type="Pfam" id="PF13895">
    <property type="entry name" value="Ig_2"/>
    <property type="match status" value="1"/>
</dbReference>
<dbReference type="SMART" id="SM00409">
    <property type="entry name" value="IG"/>
    <property type="match status" value="2"/>
</dbReference>
<dbReference type="SUPFAM" id="SSF48726">
    <property type="entry name" value="Immunoglobulin"/>
    <property type="match status" value="2"/>
</dbReference>
<comment type="function">
    <text evidence="1">Regulator of osteoclastogenesis which plays an important bone-specific function in osteoclast differentiation.</text>
</comment>
<comment type="subcellular location">
    <molecule>Isoform 1</molecule>
    <subcellularLocation>
        <location evidence="11">Secreted</location>
    </subcellularLocation>
</comment>
<comment type="subcellular location">
    <molecule>Isoform 2</molecule>
    <subcellularLocation>
        <location evidence="11">Cell membrane</location>
        <topology evidence="11">Single-pass type I membrane protein</topology>
    </subcellularLocation>
</comment>
<comment type="alternative products">
    <event type="alternative splicing"/>
    <isoform>
        <id>Q8IYS5-1</id>
        <name>1</name>
        <name>OSCAR-S1</name>
        <sequence type="displayed"/>
    </isoform>
    <isoform>
        <id>Q8IYS5-2</id>
        <name>2</name>
        <name>OSCAR-M1</name>
        <sequence type="described" ref="VSP_029355"/>
    </isoform>
    <isoform>
        <id>Q8IYS5-3</id>
        <name>3</name>
        <name>OSCAR-M2</name>
        <sequence type="described" ref="VSP_029353 VSP_029355"/>
    </isoform>
    <isoform>
        <id>Q8IYS5-4</id>
        <name>4</name>
        <name>OSCAR-S2</name>
        <sequence type="described" ref="VSP_029352"/>
    </isoform>
    <isoform>
        <id>Q8IYS5-5</id>
        <name>5</name>
        <sequence type="described" ref="VSP_029354"/>
    </isoform>
    <isoform>
        <id>Q8IYS5-7</id>
        <name>7</name>
        <sequence type="described" ref="VSP_029353"/>
    </isoform>
    <isoform>
        <id>Q8IYS5-6</id>
        <name>6</name>
        <name>OSCAR-M3</name>
        <sequence type="described" ref="VSP_029352 VSP_029355"/>
    </isoform>
</comment>
<comment type="similarity">
    <text evidence="11">Belongs to the leukocyte receptor complex/polymeric immunoglobulin receptor (PIR/LRC) family.</text>
</comment>